<comment type="function">
    <text evidence="1">GP-Ib, a surface membrane protein of platelets, participates in the formation of platelet plugs by binding to the A1 domain of vWF, which is already bound to the subendothelium.</text>
</comment>
<comment type="subunit">
    <text evidence="2">Two GP-Ib beta are disulfide-linked to one GP-Ib alpha. GP-IX is complexed with the GP-Ib heterodimer via a non covalent linkage. Interacts with FLNB. Interacts with FLNA (via filamin repeats 4, 9, 12, 17, 19, 21, and 23).</text>
</comment>
<comment type="subcellular location">
    <subcellularLocation>
        <location>Membrane</location>
        <topology>Single-pass type I membrane protein</topology>
    </subcellularLocation>
</comment>
<comment type="PTM">
    <text evidence="1">O-glycosylated.</text>
</comment>
<comment type="PTM">
    <text evidence="2">Glycocalicin is the product of a proteolytic cleavage/shedding, catalyzed by ADAM17, which releases most of the extracellular domain. Binding sites for vWF and thrombin are in this part of the protein.</text>
</comment>
<comment type="miscellaneous">
    <text evidence="1">Platelet activation apparently involves disruption of the macromolecular complex of GP-Ib with the platelet glycoprotein IX (GP-IX) and dissociation of GP-Ib from the actin-binding protein.</text>
</comment>
<feature type="signal peptide" evidence="1">
    <location>
        <begin position="1"/>
        <end position="16"/>
    </location>
</feature>
<feature type="chain" id="PRO_0000271748" description="Platelet glycoprotein Ib alpha chain">
    <location>
        <begin position="17"/>
        <end position="677"/>
    </location>
</feature>
<feature type="chain" id="PRO_0000446253" description="Glycocalicin" evidence="2">
    <location>
        <begin position="17"/>
        <end position="539"/>
    </location>
</feature>
<feature type="topological domain" description="Extracellular" evidence="3">
    <location>
        <begin position="17"/>
        <end position="564"/>
    </location>
</feature>
<feature type="transmembrane region" description="Helical" evidence="3">
    <location>
        <begin position="565"/>
        <end position="585"/>
    </location>
</feature>
<feature type="topological domain" description="Cytoplasmic" evidence="3">
    <location>
        <begin position="586"/>
        <end position="677"/>
    </location>
</feature>
<feature type="domain" description="LRRNT">
    <location>
        <begin position="17"/>
        <end position="47"/>
    </location>
</feature>
<feature type="repeat" description="LRR 1">
    <location>
        <begin position="72"/>
        <end position="93"/>
    </location>
</feature>
<feature type="repeat" description="LRR 2">
    <location>
        <begin position="94"/>
        <end position="115"/>
    </location>
</feature>
<feature type="repeat" description="LRR 3">
    <location>
        <begin position="117"/>
        <end position="138"/>
    </location>
</feature>
<feature type="repeat" description="LRR 4">
    <location>
        <begin position="141"/>
        <end position="162"/>
    </location>
</feature>
<feature type="repeat" description="LRR 5">
    <location>
        <begin position="165"/>
        <end position="186"/>
    </location>
</feature>
<feature type="repeat" description="LRR 6">
    <location>
        <begin position="189"/>
        <end position="210"/>
    </location>
</feature>
<feature type="domain" description="LRRCT">
    <location>
        <begin position="221"/>
        <end position="282"/>
    </location>
</feature>
<feature type="region of interest" description="Disordered" evidence="4">
    <location>
        <begin position="359"/>
        <end position="499"/>
    </location>
</feature>
<feature type="compositionally biased region" description="Low complexity" evidence="4">
    <location>
        <begin position="362"/>
        <end position="385"/>
    </location>
</feature>
<feature type="compositionally biased region" description="Low complexity" evidence="4">
    <location>
        <begin position="393"/>
        <end position="403"/>
    </location>
</feature>
<feature type="compositionally biased region" description="Low complexity" evidence="4">
    <location>
        <begin position="411"/>
        <end position="421"/>
    </location>
</feature>
<feature type="compositionally biased region" description="Low complexity" evidence="4">
    <location>
        <begin position="427"/>
        <end position="470"/>
    </location>
</feature>
<feature type="compositionally biased region" description="Pro residues" evidence="4">
    <location>
        <begin position="471"/>
        <end position="485"/>
    </location>
</feature>
<feature type="compositionally biased region" description="Low complexity" evidence="4">
    <location>
        <begin position="486"/>
        <end position="499"/>
    </location>
</feature>
<feature type="site" description="Cleavage; by ADAM17" evidence="2">
    <location>
        <begin position="539"/>
        <end position="540"/>
    </location>
</feature>
<feature type="modified residue" description="Sulfotyrosine" evidence="1">
    <location>
        <position position="291"/>
    </location>
</feature>
<feature type="modified residue" description="Sulfotyrosine" evidence="1">
    <location>
        <position position="294"/>
    </location>
</feature>
<feature type="modified residue" description="Phosphoserine" evidence="2">
    <location>
        <position position="654"/>
    </location>
</feature>
<feature type="modified residue" description="Phosphoserine" evidence="2">
    <location>
        <position position="657"/>
    </location>
</feature>
<feature type="glycosylation site" description="O-linked (GalNAc...) threonine" evidence="2">
    <location>
        <position position="309"/>
    </location>
</feature>
<feature type="glycosylation site" description="O-linked (GalNAc...) threonine" evidence="2">
    <location>
        <position position="319"/>
    </location>
</feature>
<feature type="glycosylation site" description="O-linked (GalNAc...) threonine" evidence="2">
    <location>
        <position position="323"/>
    </location>
</feature>
<feature type="glycosylation site" description="O-linked (GalNAc...) threonine" evidence="2">
    <location>
        <position position="324"/>
    </location>
</feature>
<feature type="glycosylation site" description="O-linked (GalNAc...) threonine" evidence="2">
    <location>
        <position position="346"/>
    </location>
</feature>
<feature type="glycosylation site" description="O-linked (GalNAc...) threonine" evidence="2">
    <location>
        <position position="354"/>
    </location>
</feature>
<feature type="glycosylation site" description="O-linked (GalNAc...) threonine" evidence="2">
    <location>
        <position position="368"/>
    </location>
</feature>
<feature type="glycosylation site" description="O-linked (GalNAc...) threonine" evidence="2">
    <location>
        <position position="372"/>
    </location>
</feature>
<feature type="glycosylation site" description="O-linked (GalNAc...) threonine" evidence="2">
    <location>
        <position position="376"/>
    </location>
</feature>
<feature type="glycosylation site" description="O-linked (GalNAc...) threonine" evidence="2">
    <location>
        <position position="377"/>
    </location>
</feature>
<feature type="glycosylation site" description="O-linked (GalNAc...) threonine" evidence="2">
    <location>
        <position position="399"/>
    </location>
</feature>
<feature type="glycosylation site" description="O-linked (GalNAc...) threonine" evidence="2">
    <location>
        <position position="487"/>
    </location>
</feature>
<feature type="glycosylation site" description="O-linked (GalNAc...) serine" evidence="2">
    <location>
        <position position="497"/>
    </location>
</feature>
<feature type="glycosylation site" description="O-linked (GalNAc...) threonine" evidence="2">
    <location>
        <position position="500"/>
    </location>
</feature>
<feature type="glycosylation site" description="O-linked (GalNAc...) serine" evidence="2">
    <location>
        <position position="523"/>
    </location>
</feature>
<feature type="disulfide bond" evidence="1">
    <location>
        <begin position="20"/>
        <end position="33"/>
    </location>
</feature>
<feature type="disulfide bond" evidence="1">
    <location>
        <begin position="225"/>
        <end position="264"/>
    </location>
</feature>
<feature type="disulfide bond" evidence="1">
    <location>
        <begin position="227"/>
        <end position="280"/>
    </location>
</feature>
<feature type="disulfide bond" description="Interchain (with C-147 in GP1BB)" evidence="1">
    <location>
        <position position="559"/>
    </location>
</feature>
<feature type="disulfide bond" description="Interchain (with C-147 in GP1BB)" evidence="1">
    <location>
        <position position="560"/>
    </location>
</feature>
<gene>
    <name type="primary">GP1BA</name>
</gene>
<organism>
    <name type="scientific">Canis lupus familiaris</name>
    <name type="common">Dog</name>
    <name type="synonym">Canis familiaris</name>
    <dbReference type="NCBI Taxonomy" id="9615"/>
    <lineage>
        <taxon>Eukaryota</taxon>
        <taxon>Metazoa</taxon>
        <taxon>Chordata</taxon>
        <taxon>Craniata</taxon>
        <taxon>Vertebrata</taxon>
        <taxon>Euteleostomi</taxon>
        <taxon>Mammalia</taxon>
        <taxon>Eutheria</taxon>
        <taxon>Laurasiatheria</taxon>
        <taxon>Carnivora</taxon>
        <taxon>Caniformia</taxon>
        <taxon>Canidae</taxon>
        <taxon>Canis</taxon>
    </lineage>
</organism>
<accession>Q28256</accession>
<name>GP1BA_CANLF</name>
<protein>
    <recommendedName>
        <fullName>Platelet glycoprotein Ib alpha chain</fullName>
        <shortName>GP-Ib alpha</shortName>
        <shortName>GPIb-alpha</shortName>
        <shortName>GPIbA</shortName>
        <shortName>Glycoprotein Ibalpha</shortName>
    </recommendedName>
    <cdAntigenName>CD42b</cdAntigenName>
    <component>
        <recommendedName>
            <fullName>Glycocalicin</fullName>
        </recommendedName>
    </component>
</protein>
<evidence type="ECO:0000250" key="1"/>
<evidence type="ECO:0000250" key="2">
    <source>
        <dbReference type="UniProtKB" id="P07359"/>
    </source>
</evidence>
<evidence type="ECO:0000255" key="3"/>
<evidence type="ECO:0000256" key="4">
    <source>
        <dbReference type="SAM" id="MobiDB-lite"/>
    </source>
</evidence>
<reference key="1">
    <citation type="journal article" date="1999" name="Thromb. Haemost.">
        <title>Cloning and expression of canine glycoprotein Ibalpha.</title>
        <authorList>
            <person name="Kenny D."/>
            <person name="Morateck P.A."/>
            <person name="Fahs S.A."/>
            <person name="Warltier D.C."/>
            <person name="Montgomery R.R."/>
        </authorList>
    </citation>
    <scope>NUCLEOTIDE SEQUENCE [MRNA]</scope>
    <source>
        <tissue>Platelet</tissue>
    </source>
</reference>
<reference key="2">
    <citation type="journal article" date="2002" name="Thromb. Haemost.">
        <title>Molecular modeling of the seven tandem leucine-rich repeats within the ligand-binding region of platelet glycoprotein Ib alpha.</title>
        <authorList>
            <person name="Whisstock J.C."/>
            <person name="Shen Y."/>
            <person name="Lopez J.A."/>
            <person name="Andrews R.K."/>
            <person name="Berndt M.C."/>
        </authorList>
    </citation>
    <scope>3D-STRUCTURE MODELING OF 52-216</scope>
</reference>
<keyword id="KW-0094">Blood coagulation</keyword>
<keyword id="KW-0130">Cell adhesion</keyword>
<keyword id="KW-1015">Disulfide bond</keyword>
<keyword id="KW-0325">Glycoprotein</keyword>
<keyword id="KW-0356">Hemostasis</keyword>
<keyword id="KW-0433">Leucine-rich repeat</keyword>
<keyword id="KW-0472">Membrane</keyword>
<keyword id="KW-0597">Phosphoprotein</keyword>
<keyword id="KW-1185">Reference proteome</keyword>
<keyword id="KW-0677">Repeat</keyword>
<keyword id="KW-0732">Signal</keyword>
<keyword id="KW-0765">Sulfation</keyword>
<keyword id="KW-0812">Transmembrane</keyword>
<keyword id="KW-1133">Transmembrane helix</keyword>
<proteinExistence type="evidence at transcript level"/>
<dbReference type="EMBL" id="U19489">
    <property type="protein sequence ID" value="AAC14361.1"/>
    <property type="molecule type" value="mRNA"/>
</dbReference>
<dbReference type="RefSeq" id="NP_001003083.1">
    <property type="nucleotide sequence ID" value="NM_001003083.1"/>
</dbReference>
<dbReference type="SMR" id="Q28256"/>
<dbReference type="FunCoup" id="Q28256">
    <property type="interactions" value="50"/>
</dbReference>
<dbReference type="Ensembl" id="ENSCAFT00000107187.1">
    <property type="protein sequence ID" value="ENSCAFP00000066970.1"/>
    <property type="gene ID" value="ENSCAFG00000057065.1"/>
</dbReference>
<dbReference type="Ensembl" id="ENSCAFT00030041812.1">
    <property type="protein sequence ID" value="ENSCAFP00030036478.1"/>
    <property type="gene ID" value="ENSCAFG00030022751.1"/>
</dbReference>
<dbReference type="GeneID" id="403638"/>
<dbReference type="KEGG" id="cfa:403638"/>
<dbReference type="CTD" id="2811"/>
<dbReference type="InParanoid" id="Q28256"/>
<dbReference type="OrthoDB" id="29361at33554"/>
<dbReference type="Proteomes" id="UP000002254">
    <property type="component" value="Chromosome 5"/>
</dbReference>
<dbReference type="Proteomes" id="UP000694429">
    <property type="component" value="Chromosome 5"/>
</dbReference>
<dbReference type="Proteomes" id="UP000694542">
    <property type="component" value="Unplaced"/>
</dbReference>
<dbReference type="Proteomes" id="UP000805418">
    <property type="component" value="Unplaced"/>
</dbReference>
<dbReference type="GO" id="GO:0005886">
    <property type="term" value="C:plasma membrane"/>
    <property type="evidence" value="ECO:0000318"/>
    <property type="project" value="GO_Central"/>
</dbReference>
<dbReference type="GO" id="GO:0007596">
    <property type="term" value="P:blood coagulation"/>
    <property type="evidence" value="ECO:0007669"/>
    <property type="project" value="UniProtKB-KW"/>
</dbReference>
<dbReference type="GO" id="GO:0007155">
    <property type="term" value="P:cell adhesion"/>
    <property type="evidence" value="ECO:0007669"/>
    <property type="project" value="UniProtKB-KW"/>
</dbReference>
<dbReference type="Gene3D" id="3.80.10.10">
    <property type="entry name" value="Ribonuclease Inhibitor"/>
    <property type="match status" value="1"/>
</dbReference>
<dbReference type="InterPro" id="IPR000483">
    <property type="entry name" value="Cys-rich_flank_reg_C"/>
</dbReference>
<dbReference type="InterPro" id="IPR001611">
    <property type="entry name" value="Leu-rich_rpt"/>
</dbReference>
<dbReference type="InterPro" id="IPR003591">
    <property type="entry name" value="Leu-rich_rpt_typical-subtyp"/>
</dbReference>
<dbReference type="InterPro" id="IPR032675">
    <property type="entry name" value="LRR_dom_sf"/>
</dbReference>
<dbReference type="InterPro" id="IPR000372">
    <property type="entry name" value="LRRNT"/>
</dbReference>
<dbReference type="PANTHER" id="PTHR24366">
    <property type="entry name" value="IG(IMMUNOGLOBULIN) AND LRR(LEUCINE RICH REPEAT) DOMAINS"/>
    <property type="match status" value="1"/>
</dbReference>
<dbReference type="PANTHER" id="PTHR24366:SF158">
    <property type="entry name" value="PLATELET GLYCOPROTEIN IB ALPHA CHAIN-LIKE-RELATED"/>
    <property type="match status" value="1"/>
</dbReference>
<dbReference type="Pfam" id="PF13855">
    <property type="entry name" value="LRR_8"/>
    <property type="match status" value="1"/>
</dbReference>
<dbReference type="PRINTS" id="PR01217">
    <property type="entry name" value="PRICHEXTENSN"/>
</dbReference>
<dbReference type="SMART" id="SM00364">
    <property type="entry name" value="LRR_BAC"/>
    <property type="match status" value="4"/>
</dbReference>
<dbReference type="SMART" id="SM00369">
    <property type="entry name" value="LRR_TYP"/>
    <property type="match status" value="5"/>
</dbReference>
<dbReference type="SMART" id="SM00082">
    <property type="entry name" value="LRRCT"/>
    <property type="match status" value="1"/>
</dbReference>
<dbReference type="SMART" id="SM00013">
    <property type="entry name" value="LRRNT"/>
    <property type="match status" value="1"/>
</dbReference>
<dbReference type="SUPFAM" id="SSF52058">
    <property type="entry name" value="L domain-like"/>
    <property type="match status" value="1"/>
</dbReference>
<dbReference type="PROSITE" id="PS51450">
    <property type="entry name" value="LRR"/>
    <property type="match status" value="6"/>
</dbReference>
<sequence>MHLLLWLLLLARLCRPEFICEVSKVTSQVEVNCDNKGLKALPPGLPGDTAILHLAENPLGAFSTALLGPLTRLAQLHLRQSQLTQLQVDGMLPRLETLDVSHNRLKSLPSLGRALPALTTLDASFNELVALSPGTLDGLSHLHELYLRGNKLKTLPPRLLAPTAQLRKLNLADNRLTELPPGFLEGLGELDTLYLQGNWLRTVPKGFFGDLLLPFTFLHGNPWSCDCEILYLARWLRDNSNNVYLWKEGVEAKATTPNVDSVRCVNWKNVPVHTYQGKDCPSPMDGGDMDYDNYDDEDEKLPGVEAPATRAVVSFSTHTKAHTTHWGLLYPTFAYPDHQMAYLSSTLELTEKQTMFPSTLGPIMPTTTPEPTTPPTTLEPTTTPTTPEPTTPPTTLEPTTTPITPEPTMPPTTLEPTTTPITPEPTTPSTTPTTPQPATTPTTPQPATTPTTPQPATTPTTPQPTTTPTIPELPTPPTTPEPTMPPTTLEPTTTPTSPTTTLILSESNTFLGIPELTSPCTTSEYPIVPSLVHLPEAHEVARGTSDSSRNHRLFNPDLCCLLPLGFYILGLLWLLFASVVLILLLTWAQHVKPQALAMATYTTHLELQWGKQVTVPWAWLLFLQGSFPTFRSSLFLWVRANSYVGPLMAGRRPSALSLGRGQDLLGTVGVRYSSHSL</sequence>